<proteinExistence type="evidence at transcript level"/>
<gene>
    <name type="primary">PHGDH</name>
</gene>
<comment type="function">
    <text evidence="3">Catalyzes the reversible oxidation of 3-phospho-D-glycerate to 3-phosphonooxypyruvate, the first step of the phosphorylated L-serine biosynthesis pathway. Also catalyzes the reversible oxidation of 2-hydroxyglutarate to 2-oxoglutarate and the reversible oxidation of (S)-malate to oxaloacetate.</text>
</comment>
<comment type="catalytic activity">
    <reaction evidence="3">
        <text>(2R)-3-phosphoglycerate + NAD(+) = 3-phosphooxypyruvate + NADH + H(+)</text>
        <dbReference type="Rhea" id="RHEA:12641"/>
        <dbReference type="ChEBI" id="CHEBI:15378"/>
        <dbReference type="ChEBI" id="CHEBI:18110"/>
        <dbReference type="ChEBI" id="CHEBI:57540"/>
        <dbReference type="ChEBI" id="CHEBI:57945"/>
        <dbReference type="ChEBI" id="CHEBI:58272"/>
        <dbReference type="EC" id="1.1.1.95"/>
    </reaction>
</comment>
<comment type="catalytic activity">
    <reaction evidence="3">
        <text>(R)-2-hydroxyglutarate + NAD(+) = 2-oxoglutarate + NADH + H(+)</text>
        <dbReference type="Rhea" id="RHEA:49612"/>
        <dbReference type="ChEBI" id="CHEBI:15378"/>
        <dbReference type="ChEBI" id="CHEBI:15801"/>
        <dbReference type="ChEBI" id="CHEBI:16810"/>
        <dbReference type="ChEBI" id="CHEBI:57540"/>
        <dbReference type="ChEBI" id="CHEBI:57945"/>
        <dbReference type="EC" id="1.1.1.399"/>
    </reaction>
</comment>
<comment type="catalytic activity">
    <reaction evidence="3">
        <text>(S)-malate + NAD(+) = oxaloacetate + NADH + H(+)</text>
        <dbReference type="Rhea" id="RHEA:21432"/>
        <dbReference type="ChEBI" id="CHEBI:15378"/>
        <dbReference type="ChEBI" id="CHEBI:15589"/>
        <dbReference type="ChEBI" id="CHEBI:16452"/>
        <dbReference type="ChEBI" id="CHEBI:57540"/>
        <dbReference type="ChEBI" id="CHEBI:57945"/>
        <dbReference type="EC" id="1.1.1.37"/>
    </reaction>
</comment>
<comment type="pathway">
    <text>Amino-acid biosynthesis; L-serine biosynthesis; L-serine from 3-phospho-D-glycerate: step 1/3.</text>
</comment>
<comment type="subunit">
    <text evidence="2">Homotetramer.</text>
</comment>
<comment type="similarity">
    <text evidence="5">Belongs to the D-isomer specific 2-hydroxyacid dehydrogenase family.</text>
</comment>
<sequence length="533" mass="56512">MAFANLRKVLISDSLDPCCRKILQDGGLQVVEKQNLSKEELIAELQDCEGLIVRSATKVTADVINAAEKLQVVGRAGTGVDNVDLEAATRKGILVMNTPNGNSLSAAELTCGMIMCLARQIPQATASMKDGKWERKKFMGTELNGKTLGILGLGRIGREVAIRMQSLGMKTIGYDPIISPEVSASFGVQQLPLEEIWPLCDFITVHTPLLPSTTGLLNDNTFAQCKKGVRVVNCARGGIVDEGALLRALQSGQCAGAALDVFTEEPPRGRALVDHENVISCPHLGASTKEAQSRCGEEIAVQFVDMVKGKSLTGVVNAQALTSAFSPHTKPWIGLAEALGTLMRAWAGSPKGAIQVITQGTSLKNAGNCLSPAVIVGLLKEASKQADVNLVNAKLLVKEAGLNVTTSHSPAAPGEQGFGECLLAVALAGAPYQAVGLVQGTTPVLQGLNGAVFRPEVPLRRDLPLLLFRTQTSDPAMLPTMIGLLAEAGVRLLSYQTSLVSDGETWHVMGISSLLPSLEAWKQHATEAFQFHF</sequence>
<feature type="initiator methionine" description="Removed" evidence="3">
    <location>
        <position position="1"/>
    </location>
</feature>
<feature type="chain" id="PRO_0000076015" description="D-3-phosphoglycerate dehydrogenase">
    <location>
        <begin position="2"/>
        <end position="533"/>
    </location>
</feature>
<feature type="active site" evidence="1">
    <location>
        <position position="236"/>
    </location>
</feature>
<feature type="active site" evidence="1">
    <location>
        <position position="265"/>
    </location>
</feature>
<feature type="active site" description="Proton donor" evidence="1">
    <location>
        <position position="283"/>
    </location>
</feature>
<feature type="binding site" evidence="3">
    <location>
        <position position="78"/>
    </location>
    <ligand>
        <name>NAD(+)</name>
        <dbReference type="ChEBI" id="CHEBI:57540"/>
    </ligand>
</feature>
<feature type="binding site" evidence="3">
    <location>
        <begin position="155"/>
        <end position="156"/>
    </location>
    <ligand>
        <name>NAD(+)</name>
        <dbReference type="ChEBI" id="CHEBI:57540"/>
    </ligand>
</feature>
<feature type="binding site" evidence="3">
    <location>
        <position position="175"/>
    </location>
    <ligand>
        <name>NAD(+)</name>
        <dbReference type="ChEBI" id="CHEBI:57540"/>
    </ligand>
</feature>
<feature type="binding site" evidence="3">
    <location>
        <position position="207"/>
    </location>
    <ligand>
        <name>NAD(+)</name>
        <dbReference type="ChEBI" id="CHEBI:57540"/>
    </ligand>
</feature>
<feature type="binding site" evidence="3">
    <location>
        <begin position="234"/>
        <end position="236"/>
    </location>
    <ligand>
        <name>NAD(+)</name>
        <dbReference type="ChEBI" id="CHEBI:57540"/>
    </ligand>
</feature>
<feature type="binding site" evidence="3">
    <location>
        <position position="260"/>
    </location>
    <ligand>
        <name>NAD(+)</name>
        <dbReference type="ChEBI" id="CHEBI:57540"/>
    </ligand>
</feature>
<feature type="binding site" evidence="3">
    <location>
        <begin position="283"/>
        <end position="286"/>
    </location>
    <ligand>
        <name>NAD(+)</name>
        <dbReference type="ChEBI" id="CHEBI:57540"/>
    </ligand>
</feature>
<feature type="modified residue" description="N-acetylalanine" evidence="3">
    <location>
        <position position="2"/>
    </location>
</feature>
<feature type="modified residue" description="Phosphoserine" evidence="3">
    <location>
        <position position="14"/>
    </location>
</feature>
<feature type="modified residue" description="N6-acetyllysine; alternate" evidence="4">
    <location>
        <position position="21"/>
    </location>
</feature>
<feature type="modified residue" description="N6-acetyllysine" evidence="4">
    <location>
        <position position="58"/>
    </location>
</feature>
<feature type="modified residue" description="Phosphothreonine" evidence="3">
    <location>
        <position position="78"/>
    </location>
</feature>
<feature type="cross-link" description="Glycyl lysine isopeptide (Lys-Gly) (interchain with G-Cter in SUMO1); alternate" evidence="3">
    <location>
        <position position="21"/>
    </location>
</feature>
<feature type="cross-link" description="Glycyl lysine isopeptide (Lys-Gly) (interchain with G-Cter in SUMO2); alternate" evidence="3">
    <location>
        <position position="21"/>
    </location>
</feature>
<evidence type="ECO:0000250" key="1"/>
<evidence type="ECO:0000250" key="2">
    <source>
        <dbReference type="UniProtKB" id="O08651"/>
    </source>
</evidence>
<evidence type="ECO:0000250" key="3">
    <source>
        <dbReference type="UniProtKB" id="O43175"/>
    </source>
</evidence>
<evidence type="ECO:0000250" key="4">
    <source>
        <dbReference type="UniProtKB" id="Q61753"/>
    </source>
</evidence>
<evidence type="ECO:0000305" key="5"/>
<name>SERA_PONAB</name>
<accession>Q5R7M2</accession>
<protein>
    <recommendedName>
        <fullName>D-3-phosphoglycerate dehydrogenase</fullName>
        <shortName>3-PGDH</shortName>
        <ecNumber evidence="3">1.1.1.95</ecNumber>
    </recommendedName>
    <alternativeName>
        <fullName evidence="5">2-oxoglutarate reductase</fullName>
        <ecNumber evidence="3">1.1.1.399</ecNumber>
    </alternativeName>
    <alternativeName>
        <fullName evidence="5">Malate dehydrogenase</fullName>
        <ecNumber evidence="3">1.1.1.37</ecNumber>
    </alternativeName>
</protein>
<reference key="1">
    <citation type="submission" date="2004-11" db="EMBL/GenBank/DDBJ databases">
        <authorList>
            <consortium name="The German cDNA consortium"/>
        </authorList>
    </citation>
    <scope>NUCLEOTIDE SEQUENCE [LARGE SCALE MRNA]</scope>
    <source>
        <tissue>Kidney</tissue>
    </source>
</reference>
<dbReference type="EC" id="1.1.1.95" evidence="3"/>
<dbReference type="EC" id="1.1.1.399" evidence="3"/>
<dbReference type="EC" id="1.1.1.37" evidence="3"/>
<dbReference type="EMBL" id="CR860092">
    <property type="protein sequence ID" value="CAH92238.1"/>
    <property type="molecule type" value="mRNA"/>
</dbReference>
<dbReference type="RefSeq" id="NP_001126309.1">
    <property type="nucleotide sequence ID" value="NM_001132837.1"/>
</dbReference>
<dbReference type="SMR" id="Q5R7M2"/>
<dbReference type="STRING" id="9601.ENSPPYP00000001120"/>
<dbReference type="GeneID" id="100189639"/>
<dbReference type="CTD" id="26227"/>
<dbReference type="eggNOG" id="KOG0068">
    <property type="taxonomic scope" value="Eukaryota"/>
</dbReference>
<dbReference type="InParanoid" id="Q5R7M2"/>
<dbReference type="UniPathway" id="UPA00135">
    <property type="reaction ID" value="UER00196"/>
</dbReference>
<dbReference type="Proteomes" id="UP000001595">
    <property type="component" value="Unplaced"/>
</dbReference>
<dbReference type="GO" id="GO:0030060">
    <property type="term" value="F:L-malate dehydrogenase (NAD+) activity"/>
    <property type="evidence" value="ECO:0007669"/>
    <property type="project" value="UniProtKB-EC"/>
</dbReference>
<dbReference type="GO" id="GO:0051287">
    <property type="term" value="F:NAD binding"/>
    <property type="evidence" value="ECO:0007669"/>
    <property type="project" value="InterPro"/>
</dbReference>
<dbReference type="GO" id="GO:0004617">
    <property type="term" value="F:phosphoglycerate dehydrogenase activity"/>
    <property type="evidence" value="ECO:0007669"/>
    <property type="project" value="UniProtKB-EC"/>
</dbReference>
<dbReference type="GO" id="GO:0006564">
    <property type="term" value="P:L-serine biosynthetic process"/>
    <property type="evidence" value="ECO:0007669"/>
    <property type="project" value="UniProtKB-KW"/>
</dbReference>
<dbReference type="CDD" id="cd12173">
    <property type="entry name" value="PGDH_4"/>
    <property type="match status" value="1"/>
</dbReference>
<dbReference type="FunFam" id="3.30.1330.90:FF:000005">
    <property type="entry name" value="D-3-phosphoglycerate dehydrogenase"/>
    <property type="match status" value="1"/>
</dbReference>
<dbReference type="FunFam" id="3.40.50.720:FF:000021">
    <property type="entry name" value="D-3-phosphoglycerate dehydrogenase"/>
    <property type="match status" value="1"/>
</dbReference>
<dbReference type="FunFam" id="3.40.50.720:FF:000616">
    <property type="entry name" value="D-3-phosphoglycerate dehydrogenase 2 chloroplastic"/>
    <property type="match status" value="1"/>
</dbReference>
<dbReference type="Gene3D" id="3.30.1330.90">
    <property type="entry name" value="D-3-phosphoglycerate dehydrogenase, domain 3"/>
    <property type="match status" value="1"/>
</dbReference>
<dbReference type="Gene3D" id="3.40.50.720">
    <property type="entry name" value="NAD(P)-binding Rossmann-like Domain"/>
    <property type="match status" value="2"/>
</dbReference>
<dbReference type="InterPro" id="IPR029009">
    <property type="entry name" value="ASB_dom_sf"/>
</dbReference>
<dbReference type="InterPro" id="IPR006139">
    <property type="entry name" value="D-isomer_2_OHA_DH_cat_dom"/>
</dbReference>
<dbReference type="InterPro" id="IPR029753">
    <property type="entry name" value="D-isomer_DH_CS"/>
</dbReference>
<dbReference type="InterPro" id="IPR029752">
    <property type="entry name" value="D-isomer_DH_CS1"/>
</dbReference>
<dbReference type="InterPro" id="IPR006140">
    <property type="entry name" value="D-isomer_DH_NAD-bd"/>
</dbReference>
<dbReference type="InterPro" id="IPR036291">
    <property type="entry name" value="NAD(P)-bd_dom_sf"/>
</dbReference>
<dbReference type="InterPro" id="IPR006236">
    <property type="entry name" value="PGDH"/>
</dbReference>
<dbReference type="InterPro" id="IPR045626">
    <property type="entry name" value="PGDH_ASB_dom"/>
</dbReference>
<dbReference type="NCBIfam" id="TIGR01327">
    <property type="entry name" value="PGDH"/>
    <property type="match status" value="1"/>
</dbReference>
<dbReference type="PANTHER" id="PTHR42938:SF22">
    <property type="entry name" value="D-3-PHOSPHOGLYCERATE DEHYDROGENASE"/>
    <property type="match status" value="1"/>
</dbReference>
<dbReference type="PANTHER" id="PTHR42938">
    <property type="entry name" value="FORMATE DEHYDROGENASE 1"/>
    <property type="match status" value="1"/>
</dbReference>
<dbReference type="Pfam" id="PF00389">
    <property type="entry name" value="2-Hacid_dh"/>
    <property type="match status" value="1"/>
</dbReference>
<dbReference type="Pfam" id="PF02826">
    <property type="entry name" value="2-Hacid_dh_C"/>
    <property type="match status" value="1"/>
</dbReference>
<dbReference type="Pfam" id="PF19304">
    <property type="entry name" value="PGDH_inter"/>
    <property type="match status" value="1"/>
</dbReference>
<dbReference type="SUPFAM" id="SSF52283">
    <property type="entry name" value="Formate/glycerate dehydrogenase catalytic domain-like"/>
    <property type="match status" value="1"/>
</dbReference>
<dbReference type="SUPFAM" id="SSF51735">
    <property type="entry name" value="NAD(P)-binding Rossmann-fold domains"/>
    <property type="match status" value="1"/>
</dbReference>
<dbReference type="SUPFAM" id="SSF143548">
    <property type="entry name" value="Serine metabolism enzymes domain"/>
    <property type="match status" value="1"/>
</dbReference>
<dbReference type="PROSITE" id="PS00306">
    <property type="entry name" value="CASEIN_ALPHA_BETA"/>
    <property type="match status" value="1"/>
</dbReference>
<dbReference type="PROSITE" id="PS00065">
    <property type="entry name" value="D_2_HYDROXYACID_DH_1"/>
    <property type="match status" value="1"/>
</dbReference>
<dbReference type="PROSITE" id="PS00670">
    <property type="entry name" value="D_2_HYDROXYACID_DH_2"/>
    <property type="match status" value="1"/>
</dbReference>
<dbReference type="PROSITE" id="PS00671">
    <property type="entry name" value="D_2_HYDROXYACID_DH_3"/>
    <property type="match status" value="1"/>
</dbReference>
<organism>
    <name type="scientific">Pongo abelii</name>
    <name type="common">Sumatran orangutan</name>
    <name type="synonym">Pongo pygmaeus abelii</name>
    <dbReference type="NCBI Taxonomy" id="9601"/>
    <lineage>
        <taxon>Eukaryota</taxon>
        <taxon>Metazoa</taxon>
        <taxon>Chordata</taxon>
        <taxon>Craniata</taxon>
        <taxon>Vertebrata</taxon>
        <taxon>Euteleostomi</taxon>
        <taxon>Mammalia</taxon>
        <taxon>Eutheria</taxon>
        <taxon>Euarchontoglires</taxon>
        <taxon>Primates</taxon>
        <taxon>Haplorrhini</taxon>
        <taxon>Catarrhini</taxon>
        <taxon>Hominidae</taxon>
        <taxon>Pongo</taxon>
    </lineage>
</organism>
<keyword id="KW-0007">Acetylation</keyword>
<keyword id="KW-0028">Amino-acid biosynthesis</keyword>
<keyword id="KW-1017">Isopeptide bond</keyword>
<keyword id="KW-0520">NAD</keyword>
<keyword id="KW-0560">Oxidoreductase</keyword>
<keyword id="KW-0597">Phosphoprotein</keyword>
<keyword id="KW-1185">Reference proteome</keyword>
<keyword id="KW-0718">Serine biosynthesis</keyword>
<keyword id="KW-0832">Ubl conjugation</keyword>